<accession>A6V753</accession>
<organism>
    <name type="scientific">Pseudomonas paraeruginosa (strain DSM 24068 / PA7)</name>
    <name type="common">Pseudomonas aeruginosa (strain PA7)</name>
    <dbReference type="NCBI Taxonomy" id="381754"/>
    <lineage>
        <taxon>Bacteria</taxon>
        <taxon>Pseudomonadati</taxon>
        <taxon>Pseudomonadota</taxon>
        <taxon>Gammaproteobacteria</taxon>
        <taxon>Pseudomonadales</taxon>
        <taxon>Pseudomonadaceae</taxon>
        <taxon>Pseudomonas</taxon>
        <taxon>Pseudomonas paraeruginosa</taxon>
    </lineage>
</organism>
<gene>
    <name type="ordered locus">PSPA7_3534</name>
</gene>
<keyword id="KW-0456">Lyase</keyword>
<keyword id="KW-0479">Metal-binding</keyword>
<proteinExistence type="inferred from homology"/>
<feature type="chain" id="PRO_1000013856" description="Putative 4-hydroxy-4-methyl-2-oxoglutarate aldolase">
    <location>
        <begin position="1"/>
        <end position="162"/>
    </location>
</feature>
<feature type="binding site" evidence="1">
    <location>
        <begin position="75"/>
        <end position="78"/>
    </location>
    <ligand>
        <name>substrate</name>
    </ligand>
</feature>
<feature type="binding site" evidence="1">
    <location>
        <position position="97"/>
    </location>
    <ligand>
        <name>substrate</name>
    </ligand>
</feature>
<feature type="binding site" evidence="1">
    <location>
        <position position="98"/>
    </location>
    <ligand>
        <name>a divalent metal cation</name>
        <dbReference type="ChEBI" id="CHEBI:60240"/>
    </ligand>
</feature>
<evidence type="ECO:0000250" key="1"/>
<evidence type="ECO:0000305" key="2"/>
<comment type="function">
    <text evidence="1">Catalyzes the aldol cleavage of 4-hydroxy-4-methyl-2-oxoglutarate (HMG) into 2 molecules of pyruvate. Also contains a secondary oxaloacetate (OAA) decarboxylase activity due to the common pyruvate enolate transition state formed following C-C bond cleavage in the retro-aldol and decarboxylation reactions (By similarity).</text>
</comment>
<comment type="catalytic activity">
    <reaction>
        <text>4-hydroxy-4-methyl-2-oxoglutarate = 2 pyruvate</text>
        <dbReference type="Rhea" id="RHEA:22748"/>
        <dbReference type="ChEBI" id="CHEBI:15361"/>
        <dbReference type="ChEBI" id="CHEBI:58276"/>
        <dbReference type="EC" id="4.1.3.17"/>
    </reaction>
</comment>
<comment type="catalytic activity">
    <reaction>
        <text>oxaloacetate + H(+) = pyruvate + CO2</text>
        <dbReference type="Rhea" id="RHEA:15641"/>
        <dbReference type="ChEBI" id="CHEBI:15361"/>
        <dbReference type="ChEBI" id="CHEBI:15378"/>
        <dbReference type="ChEBI" id="CHEBI:16452"/>
        <dbReference type="ChEBI" id="CHEBI:16526"/>
        <dbReference type="EC" id="4.1.1.112"/>
    </reaction>
</comment>
<comment type="cofactor">
    <cofactor evidence="1">
        <name>a divalent metal cation</name>
        <dbReference type="ChEBI" id="CHEBI:60240"/>
    </cofactor>
    <text evidence="1">Divalent metal cation.</text>
</comment>
<comment type="subunit">
    <text evidence="1">Homotrimer.</text>
</comment>
<comment type="similarity">
    <text evidence="2">Belongs to the class II aldolase/RraA-like family.</text>
</comment>
<sequence>MHYVTPDLCDAYPELVQVVEPMFSNFGGRDAFGGEIVTIKCFEDNSLVKEQVDKDGKGKVLVVDGGGSLRRALLGDMLAEKAAKNGWEGIVVYGCIRDVDVIAQTELGVQALASHPMKTDKRGIGDLNVVVTFGGVTFRPGEFVYADNNGIIVSPQALNMPG</sequence>
<reference key="1">
    <citation type="submission" date="2007-06" db="EMBL/GenBank/DDBJ databases">
        <authorList>
            <person name="Dodson R.J."/>
            <person name="Harkins D."/>
            <person name="Paulsen I.T."/>
        </authorList>
    </citation>
    <scope>NUCLEOTIDE SEQUENCE [LARGE SCALE GENOMIC DNA]</scope>
    <source>
        <strain>DSM 24068 / PA7</strain>
    </source>
</reference>
<protein>
    <recommendedName>
        <fullName>Putative 4-hydroxy-4-methyl-2-oxoglutarate aldolase</fullName>
        <shortName>HMG aldolase</shortName>
        <ecNumber>4.1.3.17</ecNumber>
    </recommendedName>
    <alternativeName>
        <fullName>Oxaloacetate decarboxylase</fullName>
        <shortName>OAA decarboxylase</shortName>
        <ecNumber>4.1.1.112</ecNumber>
    </alternativeName>
    <alternativeName>
        <fullName>Regulator of ribonuclease activity homolog</fullName>
    </alternativeName>
    <alternativeName>
        <fullName>RraA-like protein</fullName>
    </alternativeName>
</protein>
<dbReference type="EC" id="4.1.3.17"/>
<dbReference type="EC" id="4.1.1.112"/>
<dbReference type="EMBL" id="CP000744">
    <property type="protein sequence ID" value="ABR81960.1"/>
    <property type="molecule type" value="Genomic_DNA"/>
</dbReference>
<dbReference type="RefSeq" id="WP_003152917.1">
    <property type="nucleotide sequence ID" value="NC_009656.1"/>
</dbReference>
<dbReference type="SMR" id="A6V753"/>
<dbReference type="GeneID" id="77221644"/>
<dbReference type="KEGG" id="pap:PSPA7_3534"/>
<dbReference type="HOGENOM" id="CLU_072626_4_0_6"/>
<dbReference type="Proteomes" id="UP000001582">
    <property type="component" value="Chromosome"/>
</dbReference>
<dbReference type="GO" id="GO:0047443">
    <property type="term" value="F:4-hydroxy-4-methyl-2-oxoglutarate aldolase activity"/>
    <property type="evidence" value="ECO:0007669"/>
    <property type="project" value="UniProtKB-EC"/>
</dbReference>
<dbReference type="GO" id="GO:0046872">
    <property type="term" value="F:metal ion binding"/>
    <property type="evidence" value="ECO:0007669"/>
    <property type="project" value="UniProtKB-KW"/>
</dbReference>
<dbReference type="GO" id="GO:0008948">
    <property type="term" value="F:oxaloacetate decarboxylase activity"/>
    <property type="evidence" value="ECO:0007669"/>
    <property type="project" value="UniProtKB-EC"/>
</dbReference>
<dbReference type="GO" id="GO:0008428">
    <property type="term" value="F:ribonuclease inhibitor activity"/>
    <property type="evidence" value="ECO:0007669"/>
    <property type="project" value="InterPro"/>
</dbReference>
<dbReference type="GO" id="GO:0051252">
    <property type="term" value="P:regulation of RNA metabolic process"/>
    <property type="evidence" value="ECO:0007669"/>
    <property type="project" value="InterPro"/>
</dbReference>
<dbReference type="CDD" id="cd16841">
    <property type="entry name" value="RraA_family"/>
    <property type="match status" value="1"/>
</dbReference>
<dbReference type="Gene3D" id="3.50.30.40">
    <property type="entry name" value="Ribonuclease E inhibitor RraA/RraA-like"/>
    <property type="match status" value="1"/>
</dbReference>
<dbReference type="InterPro" id="IPR010203">
    <property type="entry name" value="RraA"/>
</dbReference>
<dbReference type="InterPro" id="IPR005493">
    <property type="entry name" value="RraA/RraA-like"/>
</dbReference>
<dbReference type="InterPro" id="IPR036704">
    <property type="entry name" value="RraA/RraA-like_sf"/>
</dbReference>
<dbReference type="NCBIfam" id="TIGR01935">
    <property type="entry name" value="NOT-MenG"/>
    <property type="match status" value="1"/>
</dbReference>
<dbReference type="NCBIfam" id="NF006875">
    <property type="entry name" value="PRK09372.1"/>
    <property type="match status" value="1"/>
</dbReference>
<dbReference type="NCBIfam" id="NF009134">
    <property type="entry name" value="PRK12487.1"/>
    <property type="match status" value="1"/>
</dbReference>
<dbReference type="PANTHER" id="PTHR33254">
    <property type="entry name" value="4-HYDROXY-4-METHYL-2-OXOGLUTARATE ALDOLASE 3-RELATED"/>
    <property type="match status" value="1"/>
</dbReference>
<dbReference type="PANTHER" id="PTHR33254:SF29">
    <property type="entry name" value="REGULATOR OF RIBONUCLEASE ACTIVITY A"/>
    <property type="match status" value="1"/>
</dbReference>
<dbReference type="Pfam" id="PF03737">
    <property type="entry name" value="RraA-like"/>
    <property type="match status" value="1"/>
</dbReference>
<dbReference type="SUPFAM" id="SSF89562">
    <property type="entry name" value="RraA-like"/>
    <property type="match status" value="1"/>
</dbReference>
<name>RRAAH_PSEP7</name>